<protein>
    <recommendedName>
        <fullName evidence="1">Large ribosomal subunit protein uL29</fullName>
    </recommendedName>
    <alternativeName>
        <fullName evidence="2">50S ribosomal protein L29</fullName>
    </alternativeName>
</protein>
<dbReference type="EMBL" id="AE013598">
    <property type="protein sequence ID" value="AAW76829.1"/>
    <property type="molecule type" value="Genomic_DNA"/>
</dbReference>
<dbReference type="SMR" id="Q5GWU2"/>
<dbReference type="STRING" id="291331.XOO3575"/>
<dbReference type="KEGG" id="xoo:XOO3575"/>
<dbReference type="HOGENOM" id="CLU_158491_1_2_6"/>
<dbReference type="Proteomes" id="UP000006735">
    <property type="component" value="Chromosome"/>
</dbReference>
<dbReference type="GO" id="GO:0022625">
    <property type="term" value="C:cytosolic large ribosomal subunit"/>
    <property type="evidence" value="ECO:0007669"/>
    <property type="project" value="TreeGrafter"/>
</dbReference>
<dbReference type="GO" id="GO:0003735">
    <property type="term" value="F:structural constituent of ribosome"/>
    <property type="evidence" value="ECO:0007669"/>
    <property type="project" value="InterPro"/>
</dbReference>
<dbReference type="GO" id="GO:0006412">
    <property type="term" value="P:translation"/>
    <property type="evidence" value="ECO:0007669"/>
    <property type="project" value="UniProtKB-UniRule"/>
</dbReference>
<dbReference type="CDD" id="cd00427">
    <property type="entry name" value="Ribosomal_L29_HIP"/>
    <property type="match status" value="1"/>
</dbReference>
<dbReference type="FunFam" id="1.10.287.310:FF:000001">
    <property type="entry name" value="50S ribosomal protein L29"/>
    <property type="match status" value="1"/>
</dbReference>
<dbReference type="Gene3D" id="1.10.287.310">
    <property type="match status" value="1"/>
</dbReference>
<dbReference type="HAMAP" id="MF_00374">
    <property type="entry name" value="Ribosomal_uL29"/>
    <property type="match status" value="1"/>
</dbReference>
<dbReference type="InterPro" id="IPR050063">
    <property type="entry name" value="Ribosomal_protein_uL29"/>
</dbReference>
<dbReference type="InterPro" id="IPR001854">
    <property type="entry name" value="Ribosomal_uL29"/>
</dbReference>
<dbReference type="InterPro" id="IPR036049">
    <property type="entry name" value="Ribosomal_uL29_sf"/>
</dbReference>
<dbReference type="NCBIfam" id="TIGR00012">
    <property type="entry name" value="L29"/>
    <property type="match status" value="1"/>
</dbReference>
<dbReference type="PANTHER" id="PTHR10916">
    <property type="entry name" value="60S RIBOSOMAL PROTEIN L35/50S RIBOSOMAL PROTEIN L29"/>
    <property type="match status" value="1"/>
</dbReference>
<dbReference type="PANTHER" id="PTHR10916:SF0">
    <property type="entry name" value="LARGE RIBOSOMAL SUBUNIT PROTEIN UL29C"/>
    <property type="match status" value="1"/>
</dbReference>
<dbReference type="Pfam" id="PF00831">
    <property type="entry name" value="Ribosomal_L29"/>
    <property type="match status" value="1"/>
</dbReference>
<dbReference type="SUPFAM" id="SSF46561">
    <property type="entry name" value="Ribosomal protein L29 (L29p)"/>
    <property type="match status" value="1"/>
</dbReference>
<evidence type="ECO:0000255" key="1">
    <source>
        <dbReference type="HAMAP-Rule" id="MF_00374"/>
    </source>
</evidence>
<evidence type="ECO:0000305" key="2"/>
<accession>Q5GWU2</accession>
<comment type="similarity">
    <text evidence="1">Belongs to the universal ribosomal protein uL29 family.</text>
</comment>
<proteinExistence type="inferred from homology"/>
<gene>
    <name evidence="1" type="primary">rpmC</name>
    <name type="ordered locus">XOO3575</name>
</gene>
<reference key="1">
    <citation type="journal article" date="2005" name="Nucleic Acids Res.">
        <title>The genome sequence of Xanthomonas oryzae pathovar oryzae KACC10331, the bacterial blight pathogen of rice.</title>
        <authorList>
            <person name="Lee B.-M."/>
            <person name="Park Y.-J."/>
            <person name="Park D.-S."/>
            <person name="Kang H.-W."/>
            <person name="Kim J.-G."/>
            <person name="Song E.-S."/>
            <person name="Park I.-C."/>
            <person name="Yoon U.-H."/>
            <person name="Hahn J.-H."/>
            <person name="Koo B.-S."/>
            <person name="Lee G.-B."/>
            <person name="Kim H."/>
            <person name="Park H.-S."/>
            <person name="Yoon K.-O."/>
            <person name="Kim J.-H."/>
            <person name="Jung C.-H."/>
            <person name="Koh N.-H."/>
            <person name="Seo J.-S."/>
            <person name="Go S.-J."/>
        </authorList>
    </citation>
    <scope>NUCLEOTIDE SEQUENCE [LARGE SCALE GENOMIC DNA]</scope>
    <source>
        <strain>KACC10331 / KXO85</strain>
    </source>
</reference>
<sequence length="61" mass="7237">MDIKQLREKSADELKAHLTDLRKEQFSLRMQQVTGQLPKTHETRRVRREIARVKHLLGSTK</sequence>
<feature type="chain" id="PRO_0000130500" description="Large ribosomal subunit protein uL29">
    <location>
        <begin position="1"/>
        <end position="61"/>
    </location>
</feature>
<organism>
    <name type="scientific">Xanthomonas oryzae pv. oryzae (strain KACC10331 / KXO85)</name>
    <dbReference type="NCBI Taxonomy" id="291331"/>
    <lineage>
        <taxon>Bacteria</taxon>
        <taxon>Pseudomonadati</taxon>
        <taxon>Pseudomonadota</taxon>
        <taxon>Gammaproteobacteria</taxon>
        <taxon>Lysobacterales</taxon>
        <taxon>Lysobacteraceae</taxon>
        <taxon>Xanthomonas</taxon>
    </lineage>
</organism>
<name>RL29_XANOR</name>
<keyword id="KW-1185">Reference proteome</keyword>
<keyword id="KW-0687">Ribonucleoprotein</keyword>
<keyword id="KW-0689">Ribosomal protein</keyword>